<organism>
    <name type="scientific">Escherichia coli (strain K12)</name>
    <dbReference type="NCBI Taxonomy" id="83333"/>
    <lineage>
        <taxon>Bacteria</taxon>
        <taxon>Pseudomonadati</taxon>
        <taxon>Pseudomonadota</taxon>
        <taxon>Gammaproteobacteria</taxon>
        <taxon>Enterobacterales</taxon>
        <taxon>Enterobacteriaceae</taxon>
        <taxon>Escherichia</taxon>
    </lineage>
</organism>
<comment type="function">
    <text evidence="2 3 5 6">Multidrug efflux pump that probably functions as a Na(+)/drug antiporter. Confers resistance to many drugs such as fluoroquinolones (norfloxacin, ciprofloxacin, enoxacin) and tetraphenylphosphonium ion (TPP) (PubMed:11566977, PubMed:9661020). Also to deoxycholate, doxorubicin, trimethoprim, chloramphenicol, fosfomycin, ethidium bromide and benzalkonium (PubMed:11566977). Also able to export peptides; when overexpressed, allows cells deleted for multiple peptidases (pepA, pepB, pepD and pepN) to grow in the presence of dipeptides Ala-Gln or Gly-Tyr which otherwise inhibit growth (PubMed:20067529). Cells overexpressing this protein have decreased intracellular levels of Ala-Gln dipeptide, and in a system that produces the Ala-Gln dipeptide overproduction of this protein increases export of the dipeptide (PubMed:20067529).</text>
</comment>
<comment type="subcellular location">
    <subcellularLocation>
        <location evidence="4">Cell inner membrane</location>
        <topology evidence="10">Multi-pass membrane protein</topology>
    </subcellularLocation>
</comment>
<comment type="similarity">
    <text evidence="9">Belongs to the multi antimicrobial extrusion (MATE) (TC 2.A.66.1) family. MdtK subfamily.</text>
</comment>
<name>MDTK_ECOLI</name>
<reference key="1">
    <citation type="journal article" date="1997" name="J. Bacteriol.">
        <title>Analysis of the boundaries of Salmonella pathogenicity island 2 and the corresponding chromosomal region of Escherichia coli K-12.</title>
        <authorList>
            <person name="Hensel M."/>
            <person name="Shea J.E."/>
            <person name="Baeumler A.J."/>
            <person name="Gleeson C."/>
            <person name="Blattner F.R."/>
            <person name="Holden D.W."/>
        </authorList>
    </citation>
    <scope>NUCLEOTIDE SEQUENCE [GENOMIC DNA]</scope>
    <source>
        <strain>K12 / MG1655 / ATCC 47076</strain>
    </source>
</reference>
<reference key="2">
    <citation type="journal article" date="1996" name="DNA Res.">
        <title>A 570-kb DNA sequence of the Escherichia coli K-12 genome corresponding to the 28.0-40.1 min region on the linkage map.</title>
        <authorList>
            <person name="Aiba H."/>
            <person name="Baba T."/>
            <person name="Fujita K."/>
            <person name="Hayashi K."/>
            <person name="Inada T."/>
            <person name="Isono K."/>
            <person name="Itoh T."/>
            <person name="Kasai H."/>
            <person name="Kashimoto K."/>
            <person name="Kimura S."/>
            <person name="Kitakawa M."/>
            <person name="Kitagawa M."/>
            <person name="Makino K."/>
            <person name="Miki T."/>
            <person name="Mizobuchi K."/>
            <person name="Mori H."/>
            <person name="Mori T."/>
            <person name="Motomura K."/>
            <person name="Nakade S."/>
            <person name="Nakamura Y."/>
            <person name="Nashimoto H."/>
            <person name="Nishio Y."/>
            <person name="Oshima T."/>
            <person name="Saito N."/>
            <person name="Sampei G."/>
            <person name="Seki Y."/>
            <person name="Sivasundaram S."/>
            <person name="Tagami H."/>
            <person name="Takeda J."/>
            <person name="Takemoto K."/>
            <person name="Takeuchi Y."/>
            <person name="Wada C."/>
            <person name="Yamamoto Y."/>
            <person name="Horiuchi T."/>
        </authorList>
    </citation>
    <scope>NUCLEOTIDE SEQUENCE [LARGE SCALE GENOMIC DNA]</scope>
    <source>
        <strain>K12 / W3110 / ATCC 27325 / DSM 5911</strain>
    </source>
</reference>
<reference key="3">
    <citation type="journal article" date="1997" name="Science">
        <title>The complete genome sequence of Escherichia coli K-12.</title>
        <authorList>
            <person name="Blattner F.R."/>
            <person name="Plunkett G. III"/>
            <person name="Bloch C.A."/>
            <person name="Perna N.T."/>
            <person name="Burland V."/>
            <person name="Riley M."/>
            <person name="Collado-Vides J."/>
            <person name="Glasner J.D."/>
            <person name="Rode C.K."/>
            <person name="Mayhew G.F."/>
            <person name="Gregor J."/>
            <person name="Davis N.W."/>
            <person name="Kirkpatrick H.A."/>
            <person name="Goeden M.A."/>
            <person name="Rose D.J."/>
            <person name="Mau B."/>
            <person name="Shao Y."/>
        </authorList>
    </citation>
    <scope>NUCLEOTIDE SEQUENCE [LARGE SCALE GENOMIC DNA]</scope>
    <source>
        <strain>K12 / MG1655 / ATCC 47076</strain>
    </source>
</reference>
<reference key="4">
    <citation type="journal article" date="2006" name="Nucleic Acids Res.">
        <title>Escherichia coli K-12: a cooperatively developed annotation snapshot -- 2005.</title>
        <authorList>
            <person name="Riley M."/>
            <person name="Abe T."/>
            <person name="Arnaud M.B."/>
            <person name="Berlyn M.K.B."/>
            <person name="Blattner F.R."/>
            <person name="Chaudhuri R.R."/>
            <person name="Glasner J.D."/>
            <person name="Horiuchi T."/>
            <person name="Keseler I.M."/>
            <person name="Kosuge T."/>
            <person name="Mori H."/>
            <person name="Perna N.T."/>
            <person name="Plunkett G. III"/>
            <person name="Rudd K.E."/>
            <person name="Serres M.H."/>
            <person name="Thomas G.H."/>
            <person name="Thomson N.R."/>
            <person name="Wishart D."/>
            <person name="Wanner B.L."/>
        </authorList>
    </citation>
    <scope>SEQUENCE REVISION TO 32</scope>
</reference>
<reference key="5">
    <citation type="journal article" date="2006" name="Mol. Syst. Biol.">
        <title>Highly accurate genome sequences of Escherichia coli K-12 strains MG1655 and W3110.</title>
        <authorList>
            <person name="Hayashi K."/>
            <person name="Morooka N."/>
            <person name="Yamamoto Y."/>
            <person name="Fujita K."/>
            <person name="Isono K."/>
            <person name="Choi S."/>
            <person name="Ohtsubo E."/>
            <person name="Baba T."/>
            <person name="Wanner B.L."/>
            <person name="Mori H."/>
            <person name="Horiuchi T."/>
        </authorList>
    </citation>
    <scope>NUCLEOTIDE SEQUENCE [LARGE SCALE GENOMIC DNA]</scope>
    <source>
        <strain>K12 / W3110 / ATCC 27325 / DSM 5911</strain>
    </source>
</reference>
<reference key="6">
    <citation type="submission" date="1992-11" db="EMBL/GenBank/DDBJ databases">
        <authorList>
            <person name="Eberhardt S.M.R."/>
            <person name="Richter G."/>
            <person name="Gimbel W."/>
            <person name="Werner T."/>
            <person name="Bacher A."/>
        </authorList>
    </citation>
    <scope>NUCLEOTIDE SEQUENCE [GENOMIC DNA] OF 1-230</scope>
    <source>
        <strain>K12 / RR28</strain>
    </source>
</reference>
<reference key="7">
    <citation type="journal article" date="1998" name="Antimicrob. Agents Chemother.">
        <title>NorM, a putative multidrug efflux protein, of Vibrio parahaemolyticus and its homolog in Escherichia coli.</title>
        <authorList>
            <person name="Morita Y."/>
            <person name="Kodama K."/>
            <person name="Shiota S."/>
            <person name="Mine T."/>
            <person name="Kataoka A."/>
            <person name="Mizushima T."/>
            <person name="Tsuchiya T."/>
        </authorList>
    </citation>
    <scope>FUNCTION IN DRUG EXPORT</scope>
    <scope>SUBSTRATE SPECIFICITY</scope>
    <source>
        <strain>K12 / KAM3</strain>
    </source>
</reference>
<reference key="8">
    <citation type="journal article" date="1999" name="Mol. Microbiol.">
        <title>The multidrug efflux protein NorM is a prototype of a new family of transporters.</title>
        <authorList>
            <person name="Brown M.H."/>
            <person name="Paulsen I.T."/>
            <person name="Skurray R.A."/>
        </authorList>
    </citation>
    <scope>IDENTIFICATION OF THE MATE FAMILY</scope>
</reference>
<reference key="9">
    <citation type="journal article" date="2001" name="J. Bacteriol.">
        <title>Analysis of a complete library of putative drug transporter genes in Escherichia coli.</title>
        <authorList>
            <person name="Nishino K."/>
            <person name="Yamaguchi A."/>
        </authorList>
    </citation>
    <scope>FUNCTION IN DRUG EXPORT</scope>
    <scope>SUBSTRATE SPECIFICITY</scope>
</reference>
<reference key="10">
    <citation type="journal article" date="2003" name="J. Antimicrob. Chemother.">
        <title>Relative contributions of the AcrAB, MdfA and NorE efflux pumps to quinolone resistance in Escherichia coli.</title>
        <authorList>
            <person name="Yang S."/>
            <person name="Clayton S.R."/>
            <person name="Zechiedrich E.L."/>
        </authorList>
    </citation>
    <scope>FUNCTION</scope>
    <source>
        <strain>K12 / MG1655 / ATCC 47076</strain>
    </source>
</reference>
<reference key="11">
    <citation type="journal article" date="2005" name="Science">
        <title>Global topology analysis of the Escherichia coli inner membrane proteome.</title>
        <authorList>
            <person name="Daley D.O."/>
            <person name="Rapp M."/>
            <person name="Granseth E."/>
            <person name="Melen K."/>
            <person name="Drew D."/>
            <person name="von Heijne G."/>
        </authorList>
    </citation>
    <scope>SUBCELLULAR LOCATION</scope>
    <scope>TOPOLOGY [LARGE SCALE ANALYSIS]</scope>
    <source>
        <strain>K12 / MG1655 / ATCC 47076</strain>
    </source>
</reference>
<reference key="12">
    <citation type="journal article" date="2010" name="FEMS Microbiol. Lett.">
        <title>Effect of multidrug-efflux transporter genes on dipeptide resistance and overproduction in Escherichia coli.</title>
        <authorList>
            <person name="Hayashi M."/>
            <person name="Tabata K."/>
            <person name="Yagasaki M."/>
            <person name="Yonetani Y."/>
        </authorList>
    </citation>
    <scope>FUNCTION</scope>
    <source>
        <strain>K12 / JM101 / ATCC 33876 / DSM 3948 / NCIMB 11926</strain>
    </source>
</reference>
<proteinExistence type="evidence at protein level"/>
<keyword id="KW-0046">Antibiotic resistance</keyword>
<keyword id="KW-0050">Antiport</keyword>
<keyword id="KW-0997">Cell inner membrane</keyword>
<keyword id="KW-1003">Cell membrane</keyword>
<keyword id="KW-0406">Ion transport</keyword>
<keyword id="KW-0472">Membrane</keyword>
<keyword id="KW-0571">Peptide transport</keyword>
<keyword id="KW-0653">Protein transport</keyword>
<keyword id="KW-1185">Reference proteome</keyword>
<keyword id="KW-0915">Sodium</keyword>
<keyword id="KW-0739">Sodium transport</keyword>
<keyword id="KW-0812">Transmembrane</keyword>
<keyword id="KW-1133">Transmembrane helix</keyword>
<keyword id="KW-0813">Transport</keyword>
<evidence type="ECO:0000255" key="1"/>
<evidence type="ECO:0000269" key="2">
    <source>
    </source>
</evidence>
<evidence type="ECO:0000269" key="3">
    <source>
    </source>
</evidence>
<evidence type="ECO:0000269" key="4">
    <source>
    </source>
</evidence>
<evidence type="ECO:0000269" key="5">
    <source>
    </source>
</evidence>
<evidence type="ECO:0000269" key="6">
    <source>
    </source>
</evidence>
<evidence type="ECO:0000303" key="7">
    <source>
    </source>
</evidence>
<evidence type="ECO:0000303" key="8">
    <source>
    </source>
</evidence>
<evidence type="ECO:0000305" key="9"/>
<evidence type="ECO:0000305" key="10">
    <source>
    </source>
</evidence>
<sequence length="457" mass="49447">MQKYISEARLLLALAIPVILAQIAQTAMGFVDTVMAGGYSATDMAAVAIGTSIWLPAILFGHGLLLALTPVIAQLNGSGRRERIAHQVRQGFWLAGFVSVLIMLVLWNAGYIIRSMENIDPALADKAVGYLRALLWGAPGYLFFQVARNQCEGLAKTKPGMVMGFIGLLVNIPVNYIFIYGHFGMPELGGVGCGVATAAVYWVMFLAMVSYIKRARSMRDIRNEKGTAKPDPAVMKRLIQLGLPIALALFFEVTLFAVVALLVSPLGIVDVAGHQIALNFSSLMFVLPMSLAAAVTIRVGYRLGQGSTLDAQTAARTGLMVGVCMATLTAIFTVSLREQIALLYNDNPEVVTLAAHLMLLAAVYQISDSIQVIGSGILRGYKDTRSIFYITFTAYWVLGLPSGYILALTDLVVEPMGPAGFWIGFIIGLTSAAIMMMLRMRFLQRLPSAIILQRASR</sequence>
<accession>P37340</accession>
<accession>P77276</accession>
<accession>P77765</accession>
<protein>
    <recommendedName>
        <fullName>Multidrug resistance protein MdtK</fullName>
    </recommendedName>
    <alternativeName>
        <fullName>Multidrug-efflux transporter</fullName>
    </alternativeName>
</protein>
<gene>
    <name type="primary">mdtK</name>
    <name evidence="7" type="synonym">norE</name>
    <name evidence="8" type="synonym">norM</name>
    <name type="synonym">ydhE</name>
    <name type="ordered locus">b1663</name>
    <name type="ordered locus">JW1655</name>
</gene>
<feature type="chain" id="PRO_0000164181" description="Multidrug resistance protein MdtK">
    <location>
        <begin position="1"/>
        <end position="457"/>
    </location>
</feature>
<feature type="topological domain" description="Cytoplasmic" evidence="1">
    <location>
        <begin position="1"/>
        <end position="10"/>
    </location>
</feature>
<feature type="transmembrane region" description="Helical" evidence="1">
    <location>
        <begin position="11"/>
        <end position="31"/>
    </location>
</feature>
<feature type="topological domain" description="Periplasmic" evidence="1">
    <location>
        <begin position="32"/>
        <end position="52"/>
    </location>
</feature>
<feature type="transmembrane region" description="Helical" evidence="1">
    <location>
        <begin position="53"/>
        <end position="73"/>
    </location>
</feature>
<feature type="topological domain" description="Cytoplasmic" evidence="1">
    <location>
        <begin position="74"/>
        <end position="92"/>
    </location>
</feature>
<feature type="transmembrane region" description="Helical" evidence="1">
    <location>
        <begin position="93"/>
        <end position="113"/>
    </location>
</feature>
<feature type="topological domain" description="Periplasmic" evidence="1">
    <location>
        <begin position="114"/>
        <end position="126"/>
    </location>
</feature>
<feature type="transmembrane region" description="Helical" evidence="1">
    <location>
        <begin position="127"/>
        <end position="147"/>
    </location>
</feature>
<feature type="topological domain" description="Cytoplasmic" evidence="1">
    <location>
        <begin position="148"/>
        <end position="159"/>
    </location>
</feature>
<feature type="transmembrane region" description="Helical" evidence="1">
    <location>
        <begin position="160"/>
        <end position="180"/>
    </location>
</feature>
<feature type="topological domain" description="Periplasmic" evidence="1">
    <location>
        <begin position="181"/>
        <end position="188"/>
    </location>
</feature>
<feature type="transmembrane region" description="Helical" evidence="1">
    <location>
        <begin position="189"/>
        <end position="209"/>
    </location>
</feature>
<feature type="topological domain" description="Cytoplasmic" evidence="1">
    <location>
        <begin position="210"/>
        <end position="242"/>
    </location>
</feature>
<feature type="transmembrane region" description="Helical" evidence="1">
    <location>
        <begin position="243"/>
        <end position="263"/>
    </location>
</feature>
<feature type="topological domain" description="Periplasmic" evidence="1">
    <location>
        <begin position="264"/>
        <end position="275"/>
    </location>
</feature>
<feature type="transmembrane region" description="Helical" evidence="1">
    <location>
        <begin position="276"/>
        <end position="296"/>
    </location>
</feature>
<feature type="topological domain" description="Cytoplasmic" evidence="1">
    <location>
        <begin position="297"/>
        <end position="313"/>
    </location>
</feature>
<feature type="transmembrane region" description="Helical" evidence="1">
    <location>
        <begin position="314"/>
        <end position="334"/>
    </location>
</feature>
<feature type="topological domain" description="Periplasmic" evidence="1">
    <location>
        <begin position="335"/>
        <end position="349"/>
    </location>
</feature>
<feature type="transmembrane region" description="Helical" evidence="1">
    <location>
        <begin position="350"/>
        <end position="370"/>
    </location>
</feature>
<feature type="topological domain" description="Cytoplasmic" evidence="1">
    <location>
        <begin position="371"/>
        <end position="386"/>
    </location>
</feature>
<feature type="transmembrane region" description="Helical" evidence="1">
    <location>
        <begin position="387"/>
        <end position="407"/>
    </location>
</feature>
<feature type="topological domain" description="Periplasmic" evidence="1">
    <location>
        <begin position="408"/>
        <end position="417"/>
    </location>
</feature>
<feature type="transmembrane region" description="Helical" evidence="1">
    <location>
        <begin position="418"/>
        <end position="438"/>
    </location>
</feature>
<feature type="topological domain" description="Cytoplasmic" evidence="4">
    <location>
        <begin position="439"/>
        <end position="457"/>
    </location>
</feature>
<feature type="sequence conflict" description="In Ref. 1; AAB47941." evidence="9" ref="1">
    <original>D</original>
    <variation>S</variation>
    <location>
        <position position="32"/>
    </location>
</feature>
<feature type="sequence conflict" description="In Ref. 6; X69109." evidence="9" ref="6">
    <original>V</original>
    <variation>A</variation>
    <location>
        <position position="100"/>
    </location>
</feature>
<dbReference type="EMBL" id="U68703">
    <property type="protein sequence ID" value="AAB47941.1"/>
    <property type="molecule type" value="Genomic_DNA"/>
</dbReference>
<dbReference type="EMBL" id="U00096">
    <property type="protein sequence ID" value="AAT48136.1"/>
    <property type="molecule type" value="Genomic_DNA"/>
</dbReference>
<dbReference type="EMBL" id="AP009048">
    <property type="protein sequence ID" value="BAA15430.1"/>
    <property type="molecule type" value="Genomic_DNA"/>
</dbReference>
<dbReference type="EMBL" id="X69109">
    <property type="status" value="NOT_ANNOTATED_CDS"/>
    <property type="molecule type" value="Genomic_DNA"/>
</dbReference>
<dbReference type="PIR" id="A64924">
    <property type="entry name" value="A64924"/>
</dbReference>
<dbReference type="RefSeq" id="WP_001174940.1">
    <property type="nucleotide sequence ID" value="NZ_SSZK01000001.1"/>
</dbReference>
<dbReference type="RefSeq" id="YP_025307.1">
    <property type="nucleotide sequence ID" value="NC_000913.3"/>
</dbReference>
<dbReference type="SMR" id="P37340"/>
<dbReference type="BioGRID" id="4260264">
    <property type="interactions" value="205"/>
</dbReference>
<dbReference type="FunCoup" id="P37340">
    <property type="interactions" value="468"/>
</dbReference>
<dbReference type="STRING" id="511145.b1663"/>
<dbReference type="BindingDB" id="P37340"/>
<dbReference type="ChEMBL" id="CHEMBL1681613"/>
<dbReference type="DrugCentral" id="P37340"/>
<dbReference type="TCDB" id="2.A.66.1.3">
    <property type="family name" value="the multidrug/oligosaccharidyl-lipid/polysaccharide (mop) flippase superfamily"/>
</dbReference>
<dbReference type="jPOST" id="P37340"/>
<dbReference type="PaxDb" id="511145-b1663"/>
<dbReference type="EnsemblBacteria" id="AAT48136">
    <property type="protein sequence ID" value="AAT48136"/>
    <property type="gene ID" value="b1663"/>
</dbReference>
<dbReference type="GeneID" id="945883"/>
<dbReference type="KEGG" id="ecj:JW1655"/>
<dbReference type="KEGG" id="eco:b1663"/>
<dbReference type="KEGG" id="ecoc:C3026_09540"/>
<dbReference type="PATRIC" id="fig|1411691.4.peg.594"/>
<dbReference type="EchoBASE" id="EB2300"/>
<dbReference type="eggNOG" id="COG0534">
    <property type="taxonomic scope" value="Bacteria"/>
</dbReference>
<dbReference type="HOGENOM" id="CLU_012893_6_0_6"/>
<dbReference type="InParanoid" id="P37340"/>
<dbReference type="OMA" id="WFFVWKL"/>
<dbReference type="OrthoDB" id="9780160at2"/>
<dbReference type="PhylomeDB" id="P37340"/>
<dbReference type="BioCyc" id="EcoCyc:YDHE-MONOMER"/>
<dbReference type="BioCyc" id="MetaCyc:YDHE-MONOMER"/>
<dbReference type="PRO" id="PR:P37340"/>
<dbReference type="Proteomes" id="UP000000625">
    <property type="component" value="Chromosome"/>
</dbReference>
<dbReference type="GO" id="GO:0016020">
    <property type="term" value="C:membrane"/>
    <property type="evidence" value="ECO:0000318"/>
    <property type="project" value="GO_Central"/>
</dbReference>
<dbReference type="GO" id="GO:0005886">
    <property type="term" value="C:plasma membrane"/>
    <property type="evidence" value="ECO:0000314"/>
    <property type="project" value="EcoCyc"/>
</dbReference>
<dbReference type="GO" id="GO:0015297">
    <property type="term" value="F:antiporter activity"/>
    <property type="evidence" value="ECO:0000314"/>
    <property type="project" value="EcoCyc"/>
</dbReference>
<dbReference type="GO" id="GO:0071916">
    <property type="term" value="F:dipeptide transmembrane transporter activity"/>
    <property type="evidence" value="ECO:0000315"/>
    <property type="project" value="EcoCyc"/>
</dbReference>
<dbReference type="GO" id="GO:0042910">
    <property type="term" value="F:xenobiotic transmembrane transporter activity"/>
    <property type="evidence" value="ECO:0000314"/>
    <property type="project" value="EcoliWiki"/>
</dbReference>
<dbReference type="GO" id="GO:0034614">
    <property type="term" value="P:cellular response to reactive oxygen species"/>
    <property type="evidence" value="ECO:0000315"/>
    <property type="project" value="EcoCyc"/>
</dbReference>
<dbReference type="GO" id="GO:0035442">
    <property type="term" value="P:dipeptide transmembrane transport"/>
    <property type="evidence" value="ECO:0000315"/>
    <property type="project" value="EcoCyc"/>
</dbReference>
<dbReference type="GO" id="GO:0015031">
    <property type="term" value="P:protein transport"/>
    <property type="evidence" value="ECO:0007669"/>
    <property type="project" value="UniProtKB-KW"/>
</dbReference>
<dbReference type="GO" id="GO:0046677">
    <property type="term" value="P:response to antibiotic"/>
    <property type="evidence" value="ECO:0000315"/>
    <property type="project" value="EcoCyc"/>
</dbReference>
<dbReference type="GO" id="GO:0006814">
    <property type="term" value="P:sodium ion transport"/>
    <property type="evidence" value="ECO:0007669"/>
    <property type="project" value="UniProtKB-UniRule"/>
</dbReference>
<dbReference type="GO" id="GO:1990961">
    <property type="term" value="P:xenobiotic detoxification by transmembrane export across the plasma membrane"/>
    <property type="evidence" value="ECO:0000315"/>
    <property type="project" value="EcoCyc"/>
</dbReference>
<dbReference type="GO" id="GO:0006855">
    <property type="term" value="P:xenobiotic transmembrane transport"/>
    <property type="evidence" value="ECO:0007669"/>
    <property type="project" value="UniProtKB-UniRule"/>
</dbReference>
<dbReference type="CDD" id="cd13131">
    <property type="entry name" value="MATE_NorM_like"/>
    <property type="match status" value="1"/>
</dbReference>
<dbReference type="HAMAP" id="MF_00400">
    <property type="entry name" value="MdtK"/>
    <property type="match status" value="1"/>
</dbReference>
<dbReference type="InterPro" id="IPR002528">
    <property type="entry name" value="MATE_fam"/>
</dbReference>
<dbReference type="InterPro" id="IPR050222">
    <property type="entry name" value="MATE_MdtK"/>
</dbReference>
<dbReference type="InterPro" id="IPR048279">
    <property type="entry name" value="MdtK-like"/>
</dbReference>
<dbReference type="InterPro" id="IPR022913">
    <property type="entry name" value="Multidrug-R_MdtK"/>
</dbReference>
<dbReference type="NCBIfam" id="TIGR00797">
    <property type="entry name" value="matE"/>
    <property type="match status" value="1"/>
</dbReference>
<dbReference type="PANTHER" id="PTHR43298:SF2">
    <property type="entry name" value="FMN_FAD EXPORTER YEEO-RELATED"/>
    <property type="match status" value="1"/>
</dbReference>
<dbReference type="PANTHER" id="PTHR43298">
    <property type="entry name" value="MULTIDRUG RESISTANCE PROTEIN NORM-RELATED"/>
    <property type="match status" value="1"/>
</dbReference>
<dbReference type="Pfam" id="PF01554">
    <property type="entry name" value="MatE"/>
    <property type="match status" value="2"/>
</dbReference>
<dbReference type="PIRSF" id="PIRSF006603">
    <property type="entry name" value="DinF"/>
    <property type="match status" value="1"/>
</dbReference>